<accession>Q6FU50</accession>
<keyword id="KW-0067">ATP-binding</keyword>
<keyword id="KW-0143">Chaperone</keyword>
<keyword id="KW-0256">Endoplasmic reticulum</keyword>
<keyword id="KW-0325">Glycoprotein</keyword>
<keyword id="KW-0378">Hydrolase</keyword>
<keyword id="KW-0547">Nucleotide-binding</keyword>
<keyword id="KW-1185">Reference proteome</keyword>
<keyword id="KW-0732">Signal</keyword>
<dbReference type="EC" id="3.6.1.-"/>
<dbReference type="EMBL" id="CR380952">
    <property type="protein sequence ID" value="CAG59168.1"/>
    <property type="molecule type" value="Genomic_DNA"/>
</dbReference>
<dbReference type="RefSeq" id="XP_446244.1">
    <property type="nucleotide sequence ID" value="XM_446244.1"/>
</dbReference>
<dbReference type="SMR" id="Q6FU50"/>
<dbReference type="FunCoup" id="Q6FU50">
    <property type="interactions" value="239"/>
</dbReference>
<dbReference type="STRING" id="284593.Q6FU50"/>
<dbReference type="GlyCosmos" id="Q6FU50">
    <property type="glycosylation" value="7 sites, No reported glycans"/>
</dbReference>
<dbReference type="EnsemblFungi" id="CAGL0F06369g-T">
    <property type="protein sequence ID" value="CAGL0F06369g-T-p1"/>
    <property type="gene ID" value="CAGL0F06369g"/>
</dbReference>
<dbReference type="KEGG" id="cgr:2887859"/>
<dbReference type="CGD" id="CAL0130854">
    <property type="gene designation" value="CAGL0F06369g"/>
</dbReference>
<dbReference type="VEuPathDB" id="FungiDB:CAGL0F06369g"/>
<dbReference type="eggNOG" id="KOG0104">
    <property type="taxonomic scope" value="Eukaryota"/>
</dbReference>
<dbReference type="HOGENOM" id="CLU_005965_5_0_1"/>
<dbReference type="InParanoid" id="Q6FU50"/>
<dbReference type="OMA" id="DYGQQNI"/>
<dbReference type="Proteomes" id="UP000002428">
    <property type="component" value="Chromosome F"/>
</dbReference>
<dbReference type="GO" id="GO:0034663">
    <property type="term" value="C:endoplasmic reticulum chaperone complex"/>
    <property type="evidence" value="ECO:0007669"/>
    <property type="project" value="TreeGrafter"/>
</dbReference>
<dbReference type="GO" id="GO:0005788">
    <property type="term" value="C:endoplasmic reticulum lumen"/>
    <property type="evidence" value="ECO:0007669"/>
    <property type="project" value="UniProtKB-SubCell"/>
</dbReference>
<dbReference type="GO" id="GO:0000774">
    <property type="term" value="F:adenyl-nucleotide exchange factor activity"/>
    <property type="evidence" value="ECO:0007669"/>
    <property type="project" value="EnsemblFungi"/>
</dbReference>
<dbReference type="GO" id="GO:0005524">
    <property type="term" value="F:ATP binding"/>
    <property type="evidence" value="ECO:0007669"/>
    <property type="project" value="UniProtKB-KW"/>
</dbReference>
<dbReference type="GO" id="GO:0016887">
    <property type="term" value="F:ATP hydrolysis activity"/>
    <property type="evidence" value="ECO:0007669"/>
    <property type="project" value="RHEA"/>
</dbReference>
<dbReference type="GO" id="GO:0140662">
    <property type="term" value="F:ATP-dependent protein folding chaperone"/>
    <property type="evidence" value="ECO:0007669"/>
    <property type="project" value="InterPro"/>
</dbReference>
<dbReference type="GO" id="GO:0051082">
    <property type="term" value="F:unfolded protein binding"/>
    <property type="evidence" value="ECO:0007669"/>
    <property type="project" value="EnsemblFungi"/>
</dbReference>
<dbReference type="GO" id="GO:0030968">
    <property type="term" value="P:endoplasmic reticulum unfolded protein response"/>
    <property type="evidence" value="ECO:0007669"/>
    <property type="project" value="TreeGrafter"/>
</dbReference>
<dbReference type="GO" id="GO:0031204">
    <property type="term" value="P:post-translational protein targeting to membrane, translocation"/>
    <property type="evidence" value="ECO:0007669"/>
    <property type="project" value="EnsemblFungi"/>
</dbReference>
<dbReference type="CDD" id="cd10230">
    <property type="entry name" value="ASKHA_NBD_HSP70_HYOU1"/>
    <property type="match status" value="1"/>
</dbReference>
<dbReference type="Gene3D" id="3.30.30.30">
    <property type="match status" value="1"/>
</dbReference>
<dbReference type="Gene3D" id="3.30.420.40">
    <property type="match status" value="2"/>
</dbReference>
<dbReference type="Gene3D" id="3.90.640.10">
    <property type="entry name" value="Actin, Chain A, domain 4"/>
    <property type="match status" value="1"/>
</dbReference>
<dbReference type="Gene3D" id="2.60.34.10">
    <property type="entry name" value="Substrate Binding Domain Of DNAk, Chain A, domain 1"/>
    <property type="match status" value="1"/>
</dbReference>
<dbReference type="InterPro" id="IPR043129">
    <property type="entry name" value="ATPase_NBD"/>
</dbReference>
<dbReference type="InterPro" id="IPR018181">
    <property type="entry name" value="Heat_shock_70_CS"/>
</dbReference>
<dbReference type="InterPro" id="IPR029047">
    <property type="entry name" value="HSP70_peptide-bd_sf"/>
</dbReference>
<dbReference type="InterPro" id="IPR013126">
    <property type="entry name" value="Hsp_70_fam"/>
</dbReference>
<dbReference type="PANTHER" id="PTHR45639">
    <property type="entry name" value="HSC70CB, ISOFORM G-RELATED"/>
    <property type="match status" value="1"/>
</dbReference>
<dbReference type="PANTHER" id="PTHR45639:SF3">
    <property type="entry name" value="HYPOXIA UP-REGULATED PROTEIN 1"/>
    <property type="match status" value="1"/>
</dbReference>
<dbReference type="Pfam" id="PF00012">
    <property type="entry name" value="HSP70"/>
    <property type="match status" value="1"/>
</dbReference>
<dbReference type="PRINTS" id="PR00301">
    <property type="entry name" value="HEATSHOCK70"/>
</dbReference>
<dbReference type="SUPFAM" id="SSF53067">
    <property type="entry name" value="Actin-like ATPase domain"/>
    <property type="match status" value="2"/>
</dbReference>
<dbReference type="PROSITE" id="PS01036">
    <property type="entry name" value="HSP70_3"/>
    <property type="match status" value="1"/>
</dbReference>
<evidence type="ECO:0000250" key="1"/>
<evidence type="ECO:0000255" key="2"/>
<evidence type="ECO:0000256" key="3">
    <source>
        <dbReference type="SAM" id="MobiDB-lite"/>
    </source>
</evidence>
<evidence type="ECO:0000305" key="4"/>
<name>LHS1_CANGA</name>
<protein>
    <recommendedName>
        <fullName>Heat shock protein 70 homolog LHS1</fullName>
        <ecNumber>3.6.1.-</ecNumber>
    </recommendedName>
</protein>
<reference key="1">
    <citation type="journal article" date="2004" name="Nature">
        <title>Genome evolution in yeasts.</title>
        <authorList>
            <person name="Dujon B."/>
            <person name="Sherman D."/>
            <person name="Fischer G."/>
            <person name="Durrens P."/>
            <person name="Casaregola S."/>
            <person name="Lafontaine I."/>
            <person name="de Montigny J."/>
            <person name="Marck C."/>
            <person name="Neuveglise C."/>
            <person name="Talla E."/>
            <person name="Goffard N."/>
            <person name="Frangeul L."/>
            <person name="Aigle M."/>
            <person name="Anthouard V."/>
            <person name="Babour A."/>
            <person name="Barbe V."/>
            <person name="Barnay S."/>
            <person name="Blanchin S."/>
            <person name="Beckerich J.-M."/>
            <person name="Beyne E."/>
            <person name="Bleykasten C."/>
            <person name="Boisrame A."/>
            <person name="Boyer J."/>
            <person name="Cattolico L."/>
            <person name="Confanioleri F."/>
            <person name="de Daruvar A."/>
            <person name="Despons L."/>
            <person name="Fabre E."/>
            <person name="Fairhead C."/>
            <person name="Ferry-Dumazet H."/>
            <person name="Groppi A."/>
            <person name="Hantraye F."/>
            <person name="Hennequin C."/>
            <person name="Jauniaux N."/>
            <person name="Joyet P."/>
            <person name="Kachouri R."/>
            <person name="Kerrest A."/>
            <person name="Koszul R."/>
            <person name="Lemaire M."/>
            <person name="Lesur I."/>
            <person name="Ma L."/>
            <person name="Muller H."/>
            <person name="Nicaud J.-M."/>
            <person name="Nikolski M."/>
            <person name="Oztas S."/>
            <person name="Ozier-Kalogeropoulos O."/>
            <person name="Pellenz S."/>
            <person name="Potier S."/>
            <person name="Richard G.-F."/>
            <person name="Straub M.-L."/>
            <person name="Suleau A."/>
            <person name="Swennen D."/>
            <person name="Tekaia F."/>
            <person name="Wesolowski-Louvel M."/>
            <person name="Westhof E."/>
            <person name="Wirth B."/>
            <person name="Zeniou-Meyer M."/>
            <person name="Zivanovic Y."/>
            <person name="Bolotin-Fukuhara M."/>
            <person name="Thierry A."/>
            <person name="Bouchier C."/>
            <person name="Caudron B."/>
            <person name="Scarpelli C."/>
            <person name="Gaillardin C."/>
            <person name="Weissenbach J."/>
            <person name="Wincker P."/>
            <person name="Souciet J.-L."/>
        </authorList>
    </citation>
    <scope>NUCLEOTIDE SEQUENCE [LARGE SCALE GENOMIC DNA]</scope>
    <source>
        <strain>ATCC 2001 / BCRC 20586 / JCM 3761 / NBRC 0622 / NRRL Y-65 / CBS 138</strain>
    </source>
</reference>
<organism>
    <name type="scientific">Candida glabrata (strain ATCC 2001 / BCRC 20586 / JCM 3761 / NBRC 0622 / NRRL Y-65 / CBS 138)</name>
    <name type="common">Yeast</name>
    <name type="synonym">Nakaseomyces glabratus</name>
    <dbReference type="NCBI Taxonomy" id="284593"/>
    <lineage>
        <taxon>Eukaryota</taxon>
        <taxon>Fungi</taxon>
        <taxon>Dikarya</taxon>
        <taxon>Ascomycota</taxon>
        <taxon>Saccharomycotina</taxon>
        <taxon>Saccharomycetes</taxon>
        <taxon>Saccharomycetales</taxon>
        <taxon>Saccharomycetaceae</taxon>
        <taxon>Nakaseomyces</taxon>
    </lineage>
</organism>
<proteinExistence type="inferred from homology"/>
<sequence length="889" mass="99634">MKLSILFLFAIAVQAAFLGIDYGQQSIKAMVVSPKAMMEIVLTPEAKRKDTSGICIRNVNGVLERHYGNSIGSLVTRFPQNTAMHLRSLLGKSMNDKDTIESYLRENPGANLTSTTRNTIAITIDGVEYPVEQLVAMNLQEIIDRANQHIKETDTTGIDFVEQVGIAIPEQFNQAQRQALLDALALTSVKDEAVLVSDGLSVAIDYALKRPDLEINVPQYYIVFDVGTSAAKATLFSLTQPEDLSSPIKIEIGAFDSEATVGGSKFIAAIADIVEDKFLEKNTKITRKSLVENPRARAKIIQAAEKAKLVLSANNEAIISIESLVDDIDFRTTIARSEFQDIFEDNKHTVVKAIKGAIGNQLWDDNISLEDISGVILSGGSSRVPMVQEEIAKLVGEEKILKNVNADETVINGATLKGLKYFGSFKTKPLDITERSLFDYSVEMSGESSSKTVFEKGTKFPNESSILYKAPKKFGKELKFDLFESDTRILSNIVDTTVSSKNWTSACKKGQLYLNVTFDLDSNRVFKIKDITVLCDSDGNAKEEEFEFIDVINDVTKATDVMPLSNAEIRQLSNAITSWNRKDRERKRVQESLNVLEAELYDCRSFIEEFEEKLGEEEFETLKSFTAFVKEKLEYLEDNSADMSKKDIEKLVRETRSQRDTLSRFYNSLDAALGSKDFQKLVDTASKSIKKYKEIESKNLADLENKAEKFNVIGLNVTEKYNSILSKMSFSSIRRSSEENIKTLAGLIDEVNESIKSKAIDDESLENLIKTKLAFEELINTLDLENRQWTYQHQLVMKELKKMYNKKMKAIKKQEKQNENEENGDDEGDDEDETKTKKYLKEATSSGDSSTIKEEDSTGSNEAGNKGDEEDEEEEEDDSSAGNVFDDEL</sequence>
<feature type="signal peptide" evidence="2">
    <location>
        <begin position="1"/>
        <end position="15"/>
    </location>
</feature>
<feature type="chain" id="PRO_0000013555" description="Heat shock protein 70 homolog LHS1">
    <location>
        <begin position="16"/>
        <end position="889"/>
    </location>
</feature>
<feature type="region of interest" description="Disordered" evidence="3">
    <location>
        <begin position="811"/>
        <end position="889"/>
    </location>
</feature>
<feature type="short sequence motif" description="Prevents secretion from ER" evidence="2">
    <location>
        <begin position="886"/>
        <end position="889"/>
    </location>
</feature>
<feature type="compositionally biased region" description="Acidic residues" evidence="3">
    <location>
        <begin position="820"/>
        <end position="833"/>
    </location>
</feature>
<feature type="compositionally biased region" description="Acidic residues" evidence="3">
    <location>
        <begin position="868"/>
        <end position="889"/>
    </location>
</feature>
<feature type="glycosylation site" description="N-linked (GlcNAc...) asparagine" evidence="2">
    <location>
        <position position="111"/>
    </location>
</feature>
<feature type="glycosylation site" description="N-linked (GlcNAc...) asparagine" evidence="2">
    <location>
        <position position="366"/>
    </location>
</feature>
<feature type="glycosylation site" description="N-linked (GlcNAc...) asparagine" evidence="2">
    <location>
        <position position="462"/>
    </location>
</feature>
<feature type="glycosylation site" description="N-linked (GlcNAc...) asparagine" evidence="2">
    <location>
        <position position="502"/>
    </location>
</feature>
<feature type="glycosylation site" description="N-linked (GlcNAc...) asparagine" evidence="2">
    <location>
        <position position="515"/>
    </location>
</feature>
<feature type="glycosylation site" description="N-linked (GlcNAc...) asparagine" evidence="2">
    <location>
        <position position="716"/>
    </location>
</feature>
<feature type="glycosylation site" description="N-linked (GlcNAc...) asparagine" evidence="2">
    <location>
        <position position="752"/>
    </location>
</feature>
<comment type="function">
    <text evidence="1">Chaperone required for protein translocation and folding in the endoplasmic reticulum.</text>
</comment>
<comment type="catalytic activity">
    <reaction>
        <text>ATP + H2O = ADP + phosphate + H(+)</text>
        <dbReference type="Rhea" id="RHEA:13065"/>
        <dbReference type="ChEBI" id="CHEBI:15377"/>
        <dbReference type="ChEBI" id="CHEBI:15378"/>
        <dbReference type="ChEBI" id="CHEBI:30616"/>
        <dbReference type="ChEBI" id="CHEBI:43474"/>
        <dbReference type="ChEBI" id="CHEBI:456216"/>
    </reaction>
</comment>
<comment type="subcellular location">
    <subcellularLocation>
        <location evidence="1">Endoplasmic reticulum lumen</location>
    </subcellularLocation>
</comment>
<comment type="similarity">
    <text evidence="4">Belongs to the heat shock protein 70 family.</text>
</comment>
<gene>
    <name type="primary">LHS1</name>
    <name type="ordered locus">CAGL0F06369g</name>
</gene>